<accession>Q3AAG3</accession>
<evidence type="ECO:0000255" key="1">
    <source>
        <dbReference type="HAMAP-Rule" id="MF_00440"/>
    </source>
</evidence>
<organism>
    <name type="scientific">Carboxydothermus hydrogenoformans (strain ATCC BAA-161 / DSM 6008 / Z-2901)</name>
    <dbReference type="NCBI Taxonomy" id="246194"/>
    <lineage>
        <taxon>Bacteria</taxon>
        <taxon>Bacillati</taxon>
        <taxon>Bacillota</taxon>
        <taxon>Clostridia</taxon>
        <taxon>Thermoanaerobacterales</taxon>
        <taxon>Thermoanaerobacteraceae</taxon>
        <taxon>Carboxydothermus</taxon>
    </lineage>
</organism>
<reference key="1">
    <citation type="journal article" date="2005" name="PLoS Genet.">
        <title>Life in hot carbon monoxide: the complete genome sequence of Carboxydothermus hydrogenoformans Z-2901.</title>
        <authorList>
            <person name="Wu M."/>
            <person name="Ren Q."/>
            <person name="Durkin A.S."/>
            <person name="Daugherty S.C."/>
            <person name="Brinkac L.M."/>
            <person name="Dodson R.J."/>
            <person name="Madupu R."/>
            <person name="Sullivan S.A."/>
            <person name="Kolonay J.F."/>
            <person name="Nelson W.C."/>
            <person name="Tallon L.J."/>
            <person name="Jones K.M."/>
            <person name="Ulrich L.E."/>
            <person name="Gonzalez J.M."/>
            <person name="Zhulin I.B."/>
            <person name="Robb F.T."/>
            <person name="Eisen J.A."/>
        </authorList>
    </citation>
    <scope>NUCLEOTIDE SEQUENCE [LARGE SCALE GENOMIC DNA]</scope>
    <source>
        <strain>ATCC BAA-161 / DSM 6008 / Z-2901</strain>
    </source>
</reference>
<gene>
    <name evidence="1" type="primary">nrdR</name>
    <name type="ordered locus">CHY_2052</name>
</gene>
<comment type="function">
    <text evidence="1">Negatively regulates transcription of bacterial ribonucleotide reductase nrd genes and operons by binding to NrdR-boxes.</text>
</comment>
<comment type="cofactor">
    <cofactor evidence="1">
        <name>Zn(2+)</name>
        <dbReference type="ChEBI" id="CHEBI:29105"/>
    </cofactor>
    <text evidence="1">Binds 1 zinc ion.</text>
</comment>
<comment type="similarity">
    <text evidence="1">Belongs to the NrdR family.</text>
</comment>
<name>NRDR_CARHZ</name>
<sequence>MRCPFCGNENTRVIDTRAAEDGFAIKRRRECENCSKRFTTYERLDDRPLIVVKKDGSKQLFDKHKIYTGLLKACEKRPIAESKLLEIAEEIERELKNRLEQEVTSLEIGEMVMSRLKKLDEVAYVRFASVYRQFKDVNSFLEELKKLLNGGENS</sequence>
<feature type="chain" id="PRO_0000230860" description="Transcriptional repressor NrdR">
    <location>
        <begin position="1"/>
        <end position="154"/>
    </location>
</feature>
<feature type="domain" description="ATP-cone" evidence="1">
    <location>
        <begin position="49"/>
        <end position="139"/>
    </location>
</feature>
<feature type="zinc finger region" evidence="1">
    <location>
        <begin position="3"/>
        <end position="34"/>
    </location>
</feature>
<proteinExistence type="inferred from homology"/>
<keyword id="KW-0067">ATP-binding</keyword>
<keyword id="KW-0238">DNA-binding</keyword>
<keyword id="KW-0479">Metal-binding</keyword>
<keyword id="KW-0547">Nucleotide-binding</keyword>
<keyword id="KW-1185">Reference proteome</keyword>
<keyword id="KW-0678">Repressor</keyword>
<keyword id="KW-0804">Transcription</keyword>
<keyword id="KW-0805">Transcription regulation</keyword>
<keyword id="KW-0862">Zinc</keyword>
<keyword id="KW-0863">Zinc-finger</keyword>
<protein>
    <recommendedName>
        <fullName evidence="1">Transcriptional repressor NrdR</fullName>
    </recommendedName>
</protein>
<dbReference type="EMBL" id="CP000141">
    <property type="protein sequence ID" value="ABB13862.1"/>
    <property type="molecule type" value="Genomic_DNA"/>
</dbReference>
<dbReference type="RefSeq" id="WP_011344944.1">
    <property type="nucleotide sequence ID" value="NC_007503.1"/>
</dbReference>
<dbReference type="SMR" id="Q3AAG3"/>
<dbReference type="FunCoup" id="Q3AAG3">
    <property type="interactions" value="229"/>
</dbReference>
<dbReference type="STRING" id="246194.CHY_2052"/>
<dbReference type="KEGG" id="chy:CHY_2052"/>
<dbReference type="eggNOG" id="COG1327">
    <property type="taxonomic scope" value="Bacteria"/>
</dbReference>
<dbReference type="HOGENOM" id="CLU_108412_0_0_9"/>
<dbReference type="InParanoid" id="Q3AAG3"/>
<dbReference type="OrthoDB" id="9807461at2"/>
<dbReference type="Proteomes" id="UP000002706">
    <property type="component" value="Chromosome"/>
</dbReference>
<dbReference type="GO" id="GO:0005524">
    <property type="term" value="F:ATP binding"/>
    <property type="evidence" value="ECO:0007669"/>
    <property type="project" value="UniProtKB-KW"/>
</dbReference>
<dbReference type="GO" id="GO:0003677">
    <property type="term" value="F:DNA binding"/>
    <property type="evidence" value="ECO:0007669"/>
    <property type="project" value="UniProtKB-KW"/>
</dbReference>
<dbReference type="GO" id="GO:0008270">
    <property type="term" value="F:zinc ion binding"/>
    <property type="evidence" value="ECO:0007669"/>
    <property type="project" value="UniProtKB-UniRule"/>
</dbReference>
<dbReference type="GO" id="GO:0045892">
    <property type="term" value="P:negative regulation of DNA-templated transcription"/>
    <property type="evidence" value="ECO:0007669"/>
    <property type="project" value="UniProtKB-UniRule"/>
</dbReference>
<dbReference type="HAMAP" id="MF_00440">
    <property type="entry name" value="NrdR"/>
    <property type="match status" value="1"/>
</dbReference>
<dbReference type="InterPro" id="IPR005144">
    <property type="entry name" value="ATP-cone_dom"/>
</dbReference>
<dbReference type="InterPro" id="IPR055173">
    <property type="entry name" value="NrdR-like_N"/>
</dbReference>
<dbReference type="InterPro" id="IPR003796">
    <property type="entry name" value="RNR_NrdR-like"/>
</dbReference>
<dbReference type="NCBIfam" id="TIGR00244">
    <property type="entry name" value="transcriptional regulator NrdR"/>
    <property type="match status" value="1"/>
</dbReference>
<dbReference type="PANTHER" id="PTHR30455">
    <property type="entry name" value="TRANSCRIPTIONAL REPRESSOR NRDR"/>
    <property type="match status" value="1"/>
</dbReference>
<dbReference type="PANTHER" id="PTHR30455:SF2">
    <property type="entry name" value="TRANSCRIPTIONAL REPRESSOR NRDR"/>
    <property type="match status" value="1"/>
</dbReference>
<dbReference type="Pfam" id="PF03477">
    <property type="entry name" value="ATP-cone"/>
    <property type="match status" value="1"/>
</dbReference>
<dbReference type="Pfam" id="PF22811">
    <property type="entry name" value="Zn_ribbon_NrdR"/>
    <property type="match status" value="1"/>
</dbReference>
<dbReference type="PROSITE" id="PS51161">
    <property type="entry name" value="ATP_CONE"/>
    <property type="match status" value="1"/>
</dbReference>